<dbReference type="EC" id="2.2.1.9" evidence="1"/>
<dbReference type="EMBL" id="CP000672">
    <property type="protein sequence ID" value="ABQ99805.1"/>
    <property type="molecule type" value="Genomic_DNA"/>
</dbReference>
<dbReference type="SMR" id="A5UGA0"/>
<dbReference type="KEGG" id="hiq:CGSHiGG_04210"/>
<dbReference type="HOGENOM" id="CLU_006051_3_0_6"/>
<dbReference type="UniPathway" id="UPA00079"/>
<dbReference type="UniPathway" id="UPA01057">
    <property type="reaction ID" value="UER00164"/>
</dbReference>
<dbReference type="Proteomes" id="UP000001990">
    <property type="component" value="Chromosome"/>
</dbReference>
<dbReference type="GO" id="GO:0070204">
    <property type="term" value="F:2-succinyl-5-enolpyruvyl-6-hydroxy-3-cyclohexene-1-carboxylic-acid synthase activity"/>
    <property type="evidence" value="ECO:0007669"/>
    <property type="project" value="UniProtKB-UniRule"/>
</dbReference>
<dbReference type="GO" id="GO:0000287">
    <property type="term" value="F:magnesium ion binding"/>
    <property type="evidence" value="ECO:0007669"/>
    <property type="project" value="UniProtKB-UniRule"/>
</dbReference>
<dbReference type="GO" id="GO:0030145">
    <property type="term" value="F:manganese ion binding"/>
    <property type="evidence" value="ECO:0007669"/>
    <property type="project" value="UniProtKB-UniRule"/>
</dbReference>
<dbReference type="GO" id="GO:0030976">
    <property type="term" value="F:thiamine pyrophosphate binding"/>
    <property type="evidence" value="ECO:0007669"/>
    <property type="project" value="UniProtKB-UniRule"/>
</dbReference>
<dbReference type="GO" id="GO:0009234">
    <property type="term" value="P:menaquinone biosynthetic process"/>
    <property type="evidence" value="ECO:0007669"/>
    <property type="project" value="UniProtKB-UniRule"/>
</dbReference>
<dbReference type="CDD" id="cd07037">
    <property type="entry name" value="TPP_PYR_MenD"/>
    <property type="match status" value="1"/>
</dbReference>
<dbReference type="CDD" id="cd02009">
    <property type="entry name" value="TPP_SHCHC_synthase"/>
    <property type="match status" value="1"/>
</dbReference>
<dbReference type="Gene3D" id="3.40.50.970">
    <property type="match status" value="2"/>
</dbReference>
<dbReference type="Gene3D" id="3.40.50.1220">
    <property type="entry name" value="TPP-binding domain"/>
    <property type="match status" value="1"/>
</dbReference>
<dbReference type="HAMAP" id="MF_01659">
    <property type="entry name" value="MenD"/>
    <property type="match status" value="1"/>
</dbReference>
<dbReference type="InterPro" id="IPR004433">
    <property type="entry name" value="MenaQ_synth_MenD"/>
</dbReference>
<dbReference type="InterPro" id="IPR032264">
    <property type="entry name" value="MenD_middle"/>
</dbReference>
<dbReference type="InterPro" id="IPR029061">
    <property type="entry name" value="THDP-binding"/>
</dbReference>
<dbReference type="InterPro" id="IPR012001">
    <property type="entry name" value="Thiamin_PyroP_enz_TPP-bd_dom"/>
</dbReference>
<dbReference type="InterPro" id="IPR011766">
    <property type="entry name" value="TPP_enzyme_TPP-bd"/>
</dbReference>
<dbReference type="NCBIfam" id="TIGR00173">
    <property type="entry name" value="menD"/>
    <property type="match status" value="1"/>
</dbReference>
<dbReference type="PANTHER" id="PTHR42916">
    <property type="entry name" value="2-SUCCINYL-5-ENOLPYRUVYL-6-HYDROXY-3-CYCLOHEXENE-1-CARBOXYLATE SYNTHASE"/>
    <property type="match status" value="1"/>
</dbReference>
<dbReference type="PANTHER" id="PTHR42916:SF1">
    <property type="entry name" value="PROTEIN PHYLLO, CHLOROPLASTIC"/>
    <property type="match status" value="1"/>
</dbReference>
<dbReference type="Pfam" id="PF02775">
    <property type="entry name" value="TPP_enzyme_C"/>
    <property type="match status" value="1"/>
</dbReference>
<dbReference type="Pfam" id="PF16582">
    <property type="entry name" value="TPP_enzyme_M_2"/>
    <property type="match status" value="1"/>
</dbReference>
<dbReference type="Pfam" id="PF02776">
    <property type="entry name" value="TPP_enzyme_N"/>
    <property type="match status" value="1"/>
</dbReference>
<dbReference type="PIRSF" id="PIRSF004983">
    <property type="entry name" value="MenD"/>
    <property type="match status" value="1"/>
</dbReference>
<dbReference type="SUPFAM" id="SSF52518">
    <property type="entry name" value="Thiamin diphosphate-binding fold (THDP-binding)"/>
    <property type="match status" value="2"/>
</dbReference>
<sequence length="568" mass="63113">MSVSVFNRCWSKVILETLVRQGVSHVCIAPGSRSTPLTLEAVRLQNAGSVTCHTHFDERGLGFFALGIAKATQSPVAIIVTSGTATANLYPAIIEARQTGVNLFVLTADRPPELWECGANQAILQQNMFGQYPVANVNLPKPNADYSAQWLISLLEQAAFQQKQQGGVVHINVPFAEPLYDATDEEVNSHSWLQPLQRWLIQKKSWINVEVQQNEVLMHENWDHWRTKRGVVVVGQLPAEQAMGINSWASAMGWVLLTDIQSGVVPTTPYEDIWLANQTVREKLLQADIVIQFGARFISKRINQFLQAFKGEFWLVEQSGKALDPYHHSLTRFNAKVHHWLRAHPPLRQKPWLLEPLALSKFCATFIEQQVGGNLTEASLALRLPTLLPYNGVLFLGNSLLVRLVDALTQLPESYPVYTNRGASGIDGLLATAAGIGIGSNKPVVAVIGDTSTLYDLNSFALFKNVTQPTLIFVINNNGGAIFDMLPVDEQVKDQFYRLPHNGDFSQIAAMFDLKYAHPYTWADLNSVVKQAYSRRKATLIEIKTNPSDGSSLYKRLIEQISHAVIGA</sequence>
<proteinExistence type="inferred from homology"/>
<reference key="1">
    <citation type="journal article" date="2007" name="Genome Biol.">
        <title>Characterization and modeling of the Haemophilus influenzae core and supragenomes based on the complete genomic sequences of Rd and 12 clinical nontypeable strains.</title>
        <authorList>
            <person name="Hogg J.S."/>
            <person name="Hu F.Z."/>
            <person name="Janto B."/>
            <person name="Boissy R."/>
            <person name="Hayes J."/>
            <person name="Keefe R."/>
            <person name="Post J.C."/>
            <person name="Ehrlich G.D."/>
        </authorList>
    </citation>
    <scope>NUCLEOTIDE SEQUENCE [LARGE SCALE GENOMIC DNA]</scope>
    <source>
        <strain>PittGG</strain>
    </source>
</reference>
<feature type="chain" id="PRO_0000341755" description="2-succinyl-5-enolpyruvyl-6-hydroxy-3-cyclohexene-1-carboxylate synthase">
    <location>
        <begin position="1"/>
        <end position="568"/>
    </location>
</feature>
<gene>
    <name evidence="1" type="primary">menD</name>
    <name type="ordered locus">CGSHiGG_04210</name>
</gene>
<protein>
    <recommendedName>
        <fullName evidence="1">2-succinyl-5-enolpyruvyl-6-hydroxy-3-cyclohexene-1-carboxylate synthase</fullName>
        <shortName evidence="1">SEPHCHC synthase</shortName>
        <ecNumber evidence="1">2.2.1.9</ecNumber>
    </recommendedName>
    <alternativeName>
        <fullName evidence="1">Menaquinone biosynthesis protein MenD</fullName>
    </alternativeName>
</protein>
<keyword id="KW-0460">Magnesium</keyword>
<keyword id="KW-0464">Manganese</keyword>
<keyword id="KW-0474">Menaquinone biosynthesis</keyword>
<keyword id="KW-0479">Metal-binding</keyword>
<keyword id="KW-0786">Thiamine pyrophosphate</keyword>
<keyword id="KW-0808">Transferase</keyword>
<name>MEND_HAEIG</name>
<organism>
    <name type="scientific">Haemophilus influenzae (strain PittGG)</name>
    <dbReference type="NCBI Taxonomy" id="374931"/>
    <lineage>
        <taxon>Bacteria</taxon>
        <taxon>Pseudomonadati</taxon>
        <taxon>Pseudomonadota</taxon>
        <taxon>Gammaproteobacteria</taxon>
        <taxon>Pasteurellales</taxon>
        <taxon>Pasteurellaceae</taxon>
        <taxon>Haemophilus</taxon>
    </lineage>
</organism>
<accession>A5UGA0</accession>
<comment type="function">
    <text evidence="1">Catalyzes the thiamine diphosphate-dependent decarboxylation of 2-oxoglutarate and the subsequent addition of the resulting succinic semialdehyde-thiamine pyrophosphate anion to isochorismate to yield 2-succinyl-5-enolpyruvyl-6-hydroxy-3-cyclohexene-1-carboxylate (SEPHCHC).</text>
</comment>
<comment type="catalytic activity">
    <reaction evidence="1">
        <text>isochorismate + 2-oxoglutarate + H(+) = 5-enolpyruvoyl-6-hydroxy-2-succinyl-cyclohex-3-ene-1-carboxylate + CO2</text>
        <dbReference type="Rhea" id="RHEA:25593"/>
        <dbReference type="ChEBI" id="CHEBI:15378"/>
        <dbReference type="ChEBI" id="CHEBI:16526"/>
        <dbReference type="ChEBI" id="CHEBI:16810"/>
        <dbReference type="ChEBI" id="CHEBI:29780"/>
        <dbReference type="ChEBI" id="CHEBI:58818"/>
        <dbReference type="EC" id="2.2.1.9"/>
    </reaction>
</comment>
<comment type="cofactor">
    <cofactor evidence="1">
        <name>Mg(2+)</name>
        <dbReference type="ChEBI" id="CHEBI:18420"/>
    </cofactor>
    <cofactor evidence="1">
        <name>Mn(2+)</name>
        <dbReference type="ChEBI" id="CHEBI:29035"/>
    </cofactor>
</comment>
<comment type="cofactor">
    <cofactor evidence="1">
        <name>thiamine diphosphate</name>
        <dbReference type="ChEBI" id="CHEBI:58937"/>
    </cofactor>
    <text evidence="1">Binds 1 thiamine pyrophosphate per subunit.</text>
</comment>
<comment type="pathway">
    <text evidence="1">Quinol/quinone metabolism; 1,4-dihydroxy-2-naphthoate biosynthesis; 1,4-dihydroxy-2-naphthoate from chorismate: step 2/7.</text>
</comment>
<comment type="pathway">
    <text evidence="1">Quinol/quinone metabolism; menaquinone biosynthesis.</text>
</comment>
<comment type="subunit">
    <text evidence="1">Homodimer.</text>
</comment>
<comment type="similarity">
    <text evidence="1">Belongs to the TPP enzyme family. MenD subfamily.</text>
</comment>
<evidence type="ECO:0000255" key="1">
    <source>
        <dbReference type="HAMAP-Rule" id="MF_01659"/>
    </source>
</evidence>